<dbReference type="EMBL" id="U89959">
    <property type="status" value="NOT_ANNOTATED_CDS"/>
    <property type="molecule type" value="Genomic_DNA"/>
</dbReference>
<dbReference type="EMBL" id="CP002684">
    <property type="protein sequence ID" value="AEE27386.1"/>
    <property type="molecule type" value="Genomic_DNA"/>
</dbReference>
<dbReference type="RefSeq" id="NP_171714.2">
    <property type="nucleotide sequence ID" value="NM_100092.3"/>
</dbReference>
<dbReference type="SMR" id="F4HVW5"/>
<dbReference type="FunCoup" id="F4HVW5">
    <property type="interactions" value="1035"/>
</dbReference>
<dbReference type="STRING" id="3702.F4HVW5"/>
<dbReference type="GlyCosmos" id="F4HVW5">
    <property type="glycosylation" value="3 sites, No reported glycans"/>
</dbReference>
<dbReference type="GlyGen" id="F4HVW5">
    <property type="glycosylation" value="3 sites"/>
</dbReference>
<dbReference type="iPTMnet" id="F4HVW5"/>
<dbReference type="PaxDb" id="3702-AT1G02120.1"/>
<dbReference type="ProteomicsDB" id="228548"/>
<dbReference type="EnsemblPlants" id="AT1G02120.1">
    <property type="protein sequence ID" value="AT1G02120.1"/>
    <property type="gene ID" value="AT1G02120"/>
</dbReference>
<dbReference type="GeneID" id="839232"/>
<dbReference type="Gramene" id="AT1G02120.1">
    <property type="protein sequence ID" value="AT1G02120.1"/>
    <property type="gene ID" value="AT1G02120"/>
</dbReference>
<dbReference type="KEGG" id="ath:AT1G02120"/>
<dbReference type="Araport" id="AT1G02120"/>
<dbReference type="TAIR" id="AT1G02120">
    <property type="gene designation" value="VAD1"/>
</dbReference>
<dbReference type="eggNOG" id="KOG1032">
    <property type="taxonomic scope" value="Eukaryota"/>
</dbReference>
<dbReference type="HOGENOM" id="CLU_025418_0_0_1"/>
<dbReference type="InParanoid" id="F4HVW5"/>
<dbReference type="OMA" id="MYMVEAR"/>
<dbReference type="PRO" id="PR:F4HVW5"/>
<dbReference type="Proteomes" id="UP000006548">
    <property type="component" value="Chromosome 1"/>
</dbReference>
<dbReference type="ExpressionAtlas" id="F4HVW5">
    <property type="expression patterns" value="baseline and differential"/>
</dbReference>
<dbReference type="GO" id="GO:0009507">
    <property type="term" value="C:chloroplast"/>
    <property type="evidence" value="ECO:0007669"/>
    <property type="project" value="UniProtKB-SubCell"/>
</dbReference>
<dbReference type="GO" id="GO:0005783">
    <property type="term" value="C:endoplasmic reticulum"/>
    <property type="evidence" value="ECO:0007005"/>
    <property type="project" value="TAIR"/>
</dbReference>
<dbReference type="GO" id="GO:0005576">
    <property type="term" value="C:extracellular region"/>
    <property type="evidence" value="ECO:0007005"/>
    <property type="project" value="TAIR"/>
</dbReference>
<dbReference type="GO" id="GO:0016020">
    <property type="term" value="C:membrane"/>
    <property type="evidence" value="ECO:0007669"/>
    <property type="project" value="UniProtKB-SubCell"/>
</dbReference>
<dbReference type="GO" id="GO:0042742">
    <property type="term" value="P:defense response to bacterium"/>
    <property type="evidence" value="ECO:0000315"/>
    <property type="project" value="UniProtKB"/>
</dbReference>
<dbReference type="GO" id="GO:0009873">
    <property type="term" value="P:ethylene-activated signaling pathway"/>
    <property type="evidence" value="ECO:0007669"/>
    <property type="project" value="UniProtKB-KW"/>
</dbReference>
<dbReference type="GO" id="GO:0043069">
    <property type="term" value="P:negative regulation of programmed cell death"/>
    <property type="evidence" value="ECO:0000315"/>
    <property type="project" value="UniProtKB"/>
</dbReference>
<dbReference type="GO" id="GO:0009626">
    <property type="term" value="P:plant-type hypersensitive response"/>
    <property type="evidence" value="ECO:0007669"/>
    <property type="project" value="UniProtKB-KW"/>
</dbReference>
<dbReference type="GO" id="GO:0009723">
    <property type="term" value="P:response to ethylene"/>
    <property type="evidence" value="ECO:0000315"/>
    <property type="project" value="UniProtKB"/>
</dbReference>
<dbReference type="GO" id="GO:0009751">
    <property type="term" value="P:response to salicylic acid"/>
    <property type="evidence" value="ECO:0000315"/>
    <property type="project" value="UniProtKB"/>
</dbReference>
<dbReference type="CDD" id="cd13220">
    <property type="entry name" value="PH-GRAM_GRAMDC"/>
    <property type="match status" value="1"/>
</dbReference>
<dbReference type="FunFam" id="2.30.29.30:FF:000008">
    <property type="entry name" value="GRAM domain containing 1B"/>
    <property type="match status" value="1"/>
</dbReference>
<dbReference type="Gene3D" id="2.30.29.30">
    <property type="entry name" value="Pleckstrin-homology domain (PH domain)/Phosphotyrosine-binding domain (PTB)"/>
    <property type="match status" value="1"/>
</dbReference>
<dbReference type="InterPro" id="IPR004182">
    <property type="entry name" value="GRAM"/>
</dbReference>
<dbReference type="InterPro" id="IPR011993">
    <property type="entry name" value="PH-like_dom_sf"/>
</dbReference>
<dbReference type="InterPro" id="IPR031968">
    <property type="entry name" value="VASt"/>
</dbReference>
<dbReference type="PANTHER" id="PTHR47666">
    <property type="entry name" value="PROTEIN VASCULAR ASSOCIATED DEATH 1, CHLOROPLASTIC"/>
    <property type="match status" value="1"/>
</dbReference>
<dbReference type="PANTHER" id="PTHR47666:SF1">
    <property type="entry name" value="PROTEIN VASCULAR ASSOCIATED DEATH 1, CHLOROPLASTIC"/>
    <property type="match status" value="1"/>
</dbReference>
<dbReference type="Pfam" id="PF02893">
    <property type="entry name" value="GRAM"/>
    <property type="match status" value="1"/>
</dbReference>
<dbReference type="Pfam" id="PF16016">
    <property type="entry name" value="VASt"/>
    <property type="match status" value="1"/>
</dbReference>
<dbReference type="SMART" id="SM00568">
    <property type="entry name" value="GRAM"/>
    <property type="match status" value="1"/>
</dbReference>
<dbReference type="PROSITE" id="PS51778">
    <property type="entry name" value="VAST"/>
    <property type="match status" value="1"/>
</dbReference>
<proteinExistence type="evidence at protein level"/>
<accession>F4HVW5</accession>
<gene>
    <name evidence="7" type="primary">VAD1</name>
    <name evidence="8" type="ordered locus">At1g02120</name>
    <name evidence="9" type="ORF">T7I23.28</name>
</gene>
<keyword id="KW-0053">Apoptosis</keyword>
<keyword id="KW-0150">Chloroplast</keyword>
<keyword id="KW-0175">Coiled coil</keyword>
<keyword id="KW-0936">Ethylene signaling pathway</keyword>
<keyword id="KW-0325">Glycoprotein</keyword>
<keyword id="KW-0381">Hypersensitive response</keyword>
<keyword id="KW-0472">Membrane</keyword>
<keyword id="KW-0611">Plant defense</keyword>
<keyword id="KW-0934">Plastid</keyword>
<keyword id="KW-1185">Reference proteome</keyword>
<keyword id="KW-0809">Transit peptide</keyword>
<keyword id="KW-0812">Transmembrane</keyword>
<keyword id="KW-1133">Transmembrane helix</keyword>
<sequence length="598" mass="67702">MAMLSTASVSGSVDLPRGTMKVDSSASPEVVSDLPPSSPKGSPDRHDPSTSSPSPSRGGDNQSEVISKSEEYRQLFRLPADEILVQDFNCACQESILMQGHMYLFIHYICFYSNIFGYETKKIIPFAEISCVKRAKTAGIFPNAIEILAGGKKYFFASFLSRDEAFKLIHDGWLEYGSAVKSEGEILVTEPQVSDGVVKRARSSMDLANELDIPVRDETLHLSSSSSLPVISQNGVPPSSVQRHAEPDVDVVAANTFNWKPEDTDAPKLSSDFTKVAEAKFSIPVEEFFRLFFSDGAVSFVESFHKNCGDKEFRCTSWQPHEKLGHTRNVSFQHPIKIYFGAKFGGCQESQKFRMYRNSHLVIETSQEISDVPYADYFTVEGVWDLKRDCRDSVEGCILDVYVNVAFSKRTVWKGKIVQSTLEECREAYAHWIRMAHELLKQKKLENQEGNKLIEDGEPLAAREERVSECDEEGKVEMVGEGVVKKSLKEAWVNLTSFVKRQSGTRQVIVLAFAVILLMQVTIVVLLKKGGGGQVEYHERYDEYSVNGETLGWLEKRMHFLREEMMMVEDRLQRMRQDHAALKAQFHHLERLLRRNKQ</sequence>
<feature type="transit peptide" description="Chloroplast" evidence="1">
    <location>
        <begin position="1"/>
        <end position="68"/>
    </location>
</feature>
<feature type="chain" id="PRO_0000431742" description="Protein VASCULAR ASSOCIATED DEATH 1, chloroplastic" evidence="1">
    <location>
        <begin position="69"/>
        <end position="598"/>
    </location>
</feature>
<feature type="transmembrane region" description="Helical" evidence="1">
    <location>
        <begin position="507"/>
        <end position="527"/>
    </location>
</feature>
<feature type="domain" description="GRAM" evidence="1">
    <location>
        <begin position="70"/>
        <end position="134"/>
    </location>
</feature>
<feature type="domain" description="VASt" evidence="3">
    <location>
        <begin position="272"/>
        <end position="444"/>
    </location>
</feature>
<feature type="region of interest" description="Disordered" evidence="4">
    <location>
        <begin position="1"/>
        <end position="64"/>
    </location>
</feature>
<feature type="coiled-coil region" evidence="1">
    <location>
        <begin position="553"/>
        <end position="595"/>
    </location>
</feature>
<feature type="compositionally biased region" description="Polar residues" evidence="4">
    <location>
        <begin position="1"/>
        <end position="11"/>
    </location>
</feature>
<feature type="glycosylation site" description="N-linked (GlcNAc...) asparagine" evidence="2">
    <location>
        <position position="61"/>
    </location>
</feature>
<feature type="glycosylation site" description="N-linked (GlcNAc...) asparagine" evidence="2">
    <location>
        <position position="329"/>
    </location>
</feature>
<feature type="glycosylation site" description="N-linked (GlcNAc...) asparagine" evidence="2">
    <location>
        <position position="494"/>
    </location>
</feature>
<evidence type="ECO:0000255" key="1"/>
<evidence type="ECO:0000255" key="2">
    <source>
        <dbReference type="PROSITE-ProRule" id="PRU00498"/>
    </source>
</evidence>
<evidence type="ECO:0000255" key="3">
    <source>
        <dbReference type="PROSITE-ProRule" id="PRU01114"/>
    </source>
</evidence>
<evidence type="ECO:0000256" key="4">
    <source>
        <dbReference type="SAM" id="MobiDB-lite"/>
    </source>
</evidence>
<evidence type="ECO:0000269" key="5">
    <source>
    </source>
</evidence>
<evidence type="ECO:0000269" key="6">
    <source>
    </source>
</evidence>
<evidence type="ECO:0000303" key="7">
    <source>
    </source>
</evidence>
<evidence type="ECO:0000312" key="8">
    <source>
        <dbReference type="Araport" id="AT1G02120"/>
    </source>
</evidence>
<evidence type="ECO:0000312" key="9">
    <source>
        <dbReference type="EMBL" id="U89959"/>
    </source>
</evidence>
<evidence type="ECO:0000312" key="10">
    <source>
        <dbReference type="Proteomes" id="UP000006548"/>
    </source>
</evidence>
<organism evidence="10">
    <name type="scientific">Arabidopsis thaliana</name>
    <name type="common">Mouse-ear cress</name>
    <dbReference type="NCBI Taxonomy" id="3702"/>
    <lineage>
        <taxon>Eukaryota</taxon>
        <taxon>Viridiplantae</taxon>
        <taxon>Streptophyta</taxon>
        <taxon>Embryophyta</taxon>
        <taxon>Tracheophyta</taxon>
        <taxon>Spermatophyta</taxon>
        <taxon>Magnoliopsida</taxon>
        <taxon>eudicotyledons</taxon>
        <taxon>Gunneridae</taxon>
        <taxon>Pentapetalae</taxon>
        <taxon>rosids</taxon>
        <taxon>malvids</taxon>
        <taxon>Brassicales</taxon>
        <taxon>Brassicaceae</taxon>
        <taxon>Camelineae</taxon>
        <taxon>Arabidopsis</taxon>
    </lineage>
</organism>
<name>VAD1_ARATH</name>
<reference key="1">
    <citation type="journal article" date="2000" name="Nature">
        <title>Sequence and analysis of chromosome 1 of the plant Arabidopsis thaliana.</title>
        <authorList>
            <person name="Theologis A."/>
            <person name="Ecker J.R."/>
            <person name="Palm C.J."/>
            <person name="Federspiel N.A."/>
            <person name="Kaul S."/>
            <person name="White O."/>
            <person name="Alonso J."/>
            <person name="Altafi H."/>
            <person name="Araujo R."/>
            <person name="Bowman C.L."/>
            <person name="Brooks S.Y."/>
            <person name="Buehler E."/>
            <person name="Chan A."/>
            <person name="Chao Q."/>
            <person name="Chen H."/>
            <person name="Cheuk R.F."/>
            <person name="Chin C.W."/>
            <person name="Chung M.K."/>
            <person name="Conn L."/>
            <person name="Conway A.B."/>
            <person name="Conway A.R."/>
            <person name="Creasy T.H."/>
            <person name="Dewar K."/>
            <person name="Dunn P."/>
            <person name="Etgu P."/>
            <person name="Feldblyum T.V."/>
            <person name="Feng J.-D."/>
            <person name="Fong B."/>
            <person name="Fujii C.Y."/>
            <person name="Gill J.E."/>
            <person name="Goldsmith A.D."/>
            <person name="Haas B."/>
            <person name="Hansen N.F."/>
            <person name="Hughes B."/>
            <person name="Huizar L."/>
            <person name="Hunter J.L."/>
            <person name="Jenkins J."/>
            <person name="Johnson-Hopson C."/>
            <person name="Khan S."/>
            <person name="Khaykin E."/>
            <person name="Kim C.J."/>
            <person name="Koo H.L."/>
            <person name="Kremenetskaia I."/>
            <person name="Kurtz D.B."/>
            <person name="Kwan A."/>
            <person name="Lam B."/>
            <person name="Langin-Hooper S."/>
            <person name="Lee A."/>
            <person name="Lee J.M."/>
            <person name="Lenz C.A."/>
            <person name="Li J.H."/>
            <person name="Li Y.-P."/>
            <person name="Lin X."/>
            <person name="Liu S.X."/>
            <person name="Liu Z.A."/>
            <person name="Luros J.S."/>
            <person name="Maiti R."/>
            <person name="Marziali A."/>
            <person name="Militscher J."/>
            <person name="Miranda M."/>
            <person name="Nguyen M."/>
            <person name="Nierman W.C."/>
            <person name="Osborne B.I."/>
            <person name="Pai G."/>
            <person name="Peterson J."/>
            <person name="Pham P.K."/>
            <person name="Rizzo M."/>
            <person name="Rooney T."/>
            <person name="Rowley D."/>
            <person name="Sakano H."/>
            <person name="Salzberg S.L."/>
            <person name="Schwartz J.R."/>
            <person name="Shinn P."/>
            <person name="Southwick A.M."/>
            <person name="Sun H."/>
            <person name="Tallon L.J."/>
            <person name="Tambunga G."/>
            <person name="Toriumi M.J."/>
            <person name="Town C.D."/>
            <person name="Utterback T."/>
            <person name="Van Aken S."/>
            <person name="Vaysberg M."/>
            <person name="Vysotskaia V.S."/>
            <person name="Walker M."/>
            <person name="Wu D."/>
            <person name="Yu G."/>
            <person name="Fraser C.M."/>
            <person name="Venter J.C."/>
            <person name="Davis R.W."/>
        </authorList>
    </citation>
    <scope>NUCLEOTIDE SEQUENCE [LARGE SCALE GENOMIC DNA]</scope>
    <source>
        <strain>cv. Columbia</strain>
    </source>
</reference>
<reference key="2">
    <citation type="journal article" date="2017" name="Plant J.">
        <title>Araport11: a complete reannotation of the Arabidopsis thaliana reference genome.</title>
        <authorList>
            <person name="Cheng C.Y."/>
            <person name="Krishnakumar V."/>
            <person name="Chan A.P."/>
            <person name="Thibaud-Nissen F."/>
            <person name="Schobel S."/>
            <person name="Town C.D."/>
        </authorList>
    </citation>
    <scope>GENOME REANNOTATION</scope>
    <source>
        <strain>cv. Columbia</strain>
    </source>
</reference>
<reference key="3">
    <citation type="journal article" date="2004" name="Plant Cell">
        <title>Vascular associated death1, a novel GRAM domain-containing protein, is a regulator of cell death and defense responses in vascular tissues.</title>
        <authorList>
            <person name="Lorrain S."/>
            <person name="Lin B."/>
            <person name="Auriac M.C."/>
            <person name="Kroj T."/>
            <person name="Saindrenan P."/>
            <person name="Nicole M."/>
            <person name="Balague C."/>
            <person name="Roby D."/>
        </authorList>
    </citation>
    <scope>FUNCTION</scope>
    <scope>DISRUPTION PHENOTYPE</scope>
    <scope>INDUCTION BY PSEUDOMONAS SYRINGAE</scope>
    <source>
        <strain>cv. Wassilewskija-4</strain>
    </source>
</reference>
<reference key="4">
    <citation type="journal article" date="2007" name="Plant Physiol.">
        <title>Ethylene is one of the key elements for cell death and defense response control in the Arabidopsis lesion mimic mutant vad1.</title>
        <authorList>
            <person name="Bouchez O."/>
            <person name="Huard C."/>
            <person name="Lorrain S."/>
            <person name="Roby D."/>
            <person name="Balague C."/>
        </authorList>
    </citation>
    <scope>FUNCTION</scope>
    <scope>DISRUPTION PHENOTYPE</scope>
    <source>
        <strain>cv. Wassilewskija-4</strain>
    </source>
</reference>
<reference key="5">
    <citation type="journal article" date="2009" name="Plant Physiol.">
        <title>Large-scale Arabidopsis phosphoproteome profiling reveals novel chloroplast kinase substrates and phosphorylation networks.</title>
        <authorList>
            <person name="Reiland S."/>
            <person name="Messerli G."/>
            <person name="Baerenfaller K."/>
            <person name="Gerrits B."/>
            <person name="Endler A."/>
            <person name="Grossmann J."/>
            <person name="Gruissem W."/>
            <person name="Baginsky S."/>
        </authorList>
    </citation>
    <scope>IDENTIFICATION BY MASS SPECTROMETRY [LARGE SCALE ANALYSIS]</scope>
</reference>
<comment type="function">
    <text evidence="5 6">Involved in ethylene- and salicylic acid-dependent cell death control associated with cells in the vicinity of vascular bundles.</text>
</comment>
<comment type="subcellular location">
    <subcellularLocation>
        <location evidence="1">Membrane</location>
        <topology evidence="1">Single-pass membrane protein</topology>
    </subcellularLocation>
    <subcellularLocation>
        <location evidence="1">Plastid</location>
        <location evidence="1">Chloroplast</location>
    </subcellularLocation>
</comment>
<comment type="induction">
    <text evidence="5">Expressed in response to pathogen infection (e.g. Pseudomonas syringae) at the vicinity of the hypersensitive lesions.</text>
</comment>
<comment type="disruption phenotype">
    <text evidence="5 6">Lesion mimic mutant with a light conditional appearance of propagative hypersensitive response (HR)-like lesions along the vascular system, and associated with expression of defense genes, production of high levels of salicylic acid (SA) (PubMed:15269331). Increased resistance to virulent and avirulent strains of Pseudomonas syringae pv tomato (PubMed:15269331, PubMed:17720753). This necrosis symptoms are ethylene-dependent and associated with ethylene accumulation (PubMed:17720753).</text>
</comment>
<protein>
    <recommendedName>
        <fullName evidence="7">Protein VASCULAR ASSOCIATED DEATH 1, chloroplastic</fullName>
    </recommendedName>
</protein>